<organism>
    <name type="scientific">Schizosaccharomyces pombe (strain 972 / ATCC 24843)</name>
    <name type="common">Fission yeast</name>
    <dbReference type="NCBI Taxonomy" id="284812"/>
    <lineage>
        <taxon>Eukaryota</taxon>
        <taxon>Fungi</taxon>
        <taxon>Dikarya</taxon>
        <taxon>Ascomycota</taxon>
        <taxon>Taphrinomycotina</taxon>
        <taxon>Schizosaccharomycetes</taxon>
        <taxon>Schizosaccharomycetales</taxon>
        <taxon>Schizosaccharomycetaceae</taxon>
        <taxon>Schizosaccharomyces</taxon>
    </lineage>
</organism>
<feature type="chain" id="PRO_0000278625" description="Meiotically up-regulated gene 129 protein">
    <location>
        <begin position="1"/>
        <end position="302"/>
    </location>
</feature>
<comment type="function">
    <text evidence="1">Has a role in meiosis.</text>
</comment>
<keyword id="KW-0469">Meiosis</keyword>
<keyword id="KW-1185">Reference proteome</keyword>
<evidence type="ECO:0000269" key="1">
    <source>
    </source>
</evidence>
<protein>
    <recommendedName>
        <fullName>Meiotically up-regulated gene 129 protein</fullName>
    </recommendedName>
</protein>
<name>MU129_SCHPO</name>
<dbReference type="EMBL" id="CU329670">
    <property type="protein sequence ID" value="CAB16297.1"/>
    <property type="molecule type" value="Genomic_DNA"/>
</dbReference>
<dbReference type="PIR" id="T39146">
    <property type="entry name" value="T39146"/>
</dbReference>
<dbReference type="RefSeq" id="NP_594280.1">
    <property type="nucleotide sequence ID" value="NM_001019703.2"/>
</dbReference>
<dbReference type="SMR" id="O14278"/>
<dbReference type="BioGRID" id="279306">
    <property type="interactions" value="15"/>
</dbReference>
<dbReference type="iPTMnet" id="O14278"/>
<dbReference type="PaxDb" id="4896-SPAC8C9.09c.1"/>
<dbReference type="EnsemblFungi" id="SPAC8C9.09c.1">
    <property type="protein sequence ID" value="SPAC8C9.09c.1:pep"/>
    <property type="gene ID" value="SPAC8C9.09c"/>
</dbReference>
<dbReference type="GeneID" id="2542860"/>
<dbReference type="KEGG" id="spo:2542860"/>
<dbReference type="PomBase" id="SPAC8C9.09c">
    <property type="gene designation" value="mug129"/>
</dbReference>
<dbReference type="VEuPathDB" id="FungiDB:SPAC8C9.09c"/>
<dbReference type="HOGENOM" id="CLU_1031167_0_0_1"/>
<dbReference type="InParanoid" id="O14278"/>
<dbReference type="OMA" id="HMENIED"/>
<dbReference type="PRO" id="PR:O14278"/>
<dbReference type="Proteomes" id="UP000002485">
    <property type="component" value="Chromosome I"/>
</dbReference>
<dbReference type="GO" id="GO:0005737">
    <property type="term" value="C:cytoplasm"/>
    <property type="evidence" value="ECO:0007005"/>
    <property type="project" value="PomBase"/>
</dbReference>
<dbReference type="GO" id="GO:0051321">
    <property type="term" value="P:meiotic cell cycle"/>
    <property type="evidence" value="ECO:0007669"/>
    <property type="project" value="UniProtKB-KW"/>
</dbReference>
<reference key="1">
    <citation type="journal article" date="2002" name="Nature">
        <title>The genome sequence of Schizosaccharomyces pombe.</title>
        <authorList>
            <person name="Wood V."/>
            <person name="Gwilliam R."/>
            <person name="Rajandream M.A."/>
            <person name="Lyne M.H."/>
            <person name="Lyne R."/>
            <person name="Stewart A."/>
            <person name="Sgouros J.G."/>
            <person name="Peat N."/>
            <person name="Hayles J."/>
            <person name="Baker S.G."/>
            <person name="Basham D."/>
            <person name="Bowman S."/>
            <person name="Brooks K."/>
            <person name="Brown D."/>
            <person name="Brown S."/>
            <person name="Chillingworth T."/>
            <person name="Churcher C.M."/>
            <person name="Collins M."/>
            <person name="Connor R."/>
            <person name="Cronin A."/>
            <person name="Davis P."/>
            <person name="Feltwell T."/>
            <person name="Fraser A."/>
            <person name="Gentles S."/>
            <person name="Goble A."/>
            <person name="Hamlin N."/>
            <person name="Harris D.E."/>
            <person name="Hidalgo J."/>
            <person name="Hodgson G."/>
            <person name="Holroyd S."/>
            <person name="Hornsby T."/>
            <person name="Howarth S."/>
            <person name="Huckle E.J."/>
            <person name="Hunt S."/>
            <person name="Jagels K."/>
            <person name="James K.D."/>
            <person name="Jones L."/>
            <person name="Jones M."/>
            <person name="Leather S."/>
            <person name="McDonald S."/>
            <person name="McLean J."/>
            <person name="Mooney P."/>
            <person name="Moule S."/>
            <person name="Mungall K.L."/>
            <person name="Murphy L.D."/>
            <person name="Niblett D."/>
            <person name="Odell C."/>
            <person name="Oliver K."/>
            <person name="O'Neil S."/>
            <person name="Pearson D."/>
            <person name="Quail M.A."/>
            <person name="Rabbinowitsch E."/>
            <person name="Rutherford K.M."/>
            <person name="Rutter S."/>
            <person name="Saunders D."/>
            <person name="Seeger K."/>
            <person name="Sharp S."/>
            <person name="Skelton J."/>
            <person name="Simmonds M.N."/>
            <person name="Squares R."/>
            <person name="Squares S."/>
            <person name="Stevens K."/>
            <person name="Taylor K."/>
            <person name="Taylor R.G."/>
            <person name="Tivey A."/>
            <person name="Walsh S.V."/>
            <person name="Warren T."/>
            <person name="Whitehead S."/>
            <person name="Woodward J.R."/>
            <person name="Volckaert G."/>
            <person name="Aert R."/>
            <person name="Robben J."/>
            <person name="Grymonprez B."/>
            <person name="Weltjens I."/>
            <person name="Vanstreels E."/>
            <person name="Rieger M."/>
            <person name="Schaefer M."/>
            <person name="Mueller-Auer S."/>
            <person name="Gabel C."/>
            <person name="Fuchs M."/>
            <person name="Duesterhoeft A."/>
            <person name="Fritzc C."/>
            <person name="Holzer E."/>
            <person name="Moestl D."/>
            <person name="Hilbert H."/>
            <person name="Borzym K."/>
            <person name="Langer I."/>
            <person name="Beck A."/>
            <person name="Lehrach H."/>
            <person name="Reinhardt R."/>
            <person name="Pohl T.M."/>
            <person name="Eger P."/>
            <person name="Zimmermann W."/>
            <person name="Wedler H."/>
            <person name="Wambutt R."/>
            <person name="Purnelle B."/>
            <person name="Goffeau A."/>
            <person name="Cadieu E."/>
            <person name="Dreano S."/>
            <person name="Gloux S."/>
            <person name="Lelaure V."/>
            <person name="Mottier S."/>
            <person name="Galibert F."/>
            <person name="Aves S.J."/>
            <person name="Xiang Z."/>
            <person name="Hunt C."/>
            <person name="Moore K."/>
            <person name="Hurst S.M."/>
            <person name="Lucas M."/>
            <person name="Rochet M."/>
            <person name="Gaillardin C."/>
            <person name="Tallada V.A."/>
            <person name="Garzon A."/>
            <person name="Thode G."/>
            <person name="Daga R.R."/>
            <person name="Cruzado L."/>
            <person name="Jimenez J."/>
            <person name="Sanchez M."/>
            <person name="del Rey F."/>
            <person name="Benito J."/>
            <person name="Dominguez A."/>
            <person name="Revuelta J.L."/>
            <person name="Moreno S."/>
            <person name="Armstrong J."/>
            <person name="Forsburg S.L."/>
            <person name="Cerutti L."/>
            <person name="Lowe T."/>
            <person name="McCombie W.R."/>
            <person name="Paulsen I."/>
            <person name="Potashkin J."/>
            <person name="Shpakovski G.V."/>
            <person name="Ussery D."/>
            <person name="Barrell B.G."/>
            <person name="Nurse P."/>
        </authorList>
    </citation>
    <scope>NUCLEOTIDE SEQUENCE [LARGE SCALE GENOMIC DNA]</scope>
    <source>
        <strain>972 / ATCC 24843</strain>
    </source>
</reference>
<reference key="2">
    <citation type="journal article" date="2005" name="Curr. Biol.">
        <title>A large-scale screen in S. pombe identifies seven novel genes required for critical meiotic events.</title>
        <authorList>
            <person name="Martin-Castellanos C."/>
            <person name="Blanco M."/>
            <person name="Rozalen A.E."/>
            <person name="Perez-Hidalgo L."/>
            <person name="Garcia A.I."/>
            <person name="Conde F."/>
            <person name="Mata J."/>
            <person name="Ellermeier C."/>
            <person name="Davis L."/>
            <person name="San-Segundo P."/>
            <person name="Smith G.R."/>
            <person name="Moreno S."/>
        </authorList>
    </citation>
    <scope>FUNCTION IN MEIOSIS</scope>
</reference>
<gene>
    <name type="primary">mug129</name>
    <name type="ORF">SPAC8C9.09c</name>
</gene>
<accession>O14278</accession>
<proteinExistence type="evidence at protein level"/>
<sequence length="302" mass="34746">MLWRILTCCKSPEEDKDEHKKKPPNVGHAHLSVVSPLNELASEKSRSSLCIEWTIDSLRQFVQQLSVRQNMSKDRREALTYFINSYNDLFHDVYYGDGRSMSKTEEAQTIVTFTIGSYLYKYTHPSELFWQRLSDNMANIEDDGTCTEAQLAFRKRAALSKLGHPAFHFLPMNNKESFHYAWSLFTSTYFQKAATVSPSPNQQPVDSVANPQLRKASEITTISSRSDVDILLGKFKALIQESPDEHCNSWIQRIYITCVLPRNHYIYLLNEQVDFLTSIEIMKNQVTEGKLCLLNEDLGTLN</sequence>